<gene>
    <name type="primary">ppt2-b</name>
</gene>
<protein>
    <recommendedName>
        <fullName>Lysosomal thioesterase PPT2-B</fullName>
        <shortName>PPT-2-B</shortName>
        <ecNumber evidence="1">3.1.2.2</ecNumber>
    </recommendedName>
</protein>
<comment type="function">
    <text evidence="1">Catalyzes the cleavage of thioester bonds from S-palmitoyl-CoA or S-palmitoyl-N-acetylcysteamine (unbranched structures) but does not have activity against palmitoylcysteine or palmitoylated proteins, branched structures or bulky head groups. Conversely, hydrolyzes both long and short chain fatty acyl-CoA substrate.</text>
</comment>
<comment type="catalytic activity">
    <reaction evidence="1">
        <text>hexadecanoyl-CoA + H2O = hexadecanoate + CoA + H(+)</text>
        <dbReference type="Rhea" id="RHEA:16645"/>
        <dbReference type="ChEBI" id="CHEBI:7896"/>
        <dbReference type="ChEBI" id="CHEBI:15377"/>
        <dbReference type="ChEBI" id="CHEBI:15378"/>
        <dbReference type="ChEBI" id="CHEBI:57287"/>
        <dbReference type="ChEBI" id="CHEBI:57379"/>
        <dbReference type="EC" id="3.1.2.2"/>
    </reaction>
</comment>
<comment type="catalytic activity">
    <reaction evidence="1">
        <text>S-hexadecanoyl-N-acetylcysteamine + H2O = N-acetylcysteamine + hexadecanoate + H(+)</text>
        <dbReference type="Rhea" id="RHEA:84099"/>
        <dbReference type="ChEBI" id="CHEBI:7896"/>
        <dbReference type="ChEBI" id="CHEBI:15377"/>
        <dbReference type="ChEBI" id="CHEBI:15378"/>
        <dbReference type="ChEBI" id="CHEBI:74410"/>
        <dbReference type="ChEBI" id="CHEBI:233601"/>
    </reaction>
</comment>
<comment type="subcellular location">
    <subcellularLocation>
        <location evidence="1">Lysosome</location>
    </subcellularLocation>
</comment>
<comment type="similarity">
    <text evidence="3">Belongs to the palmitoyl-protein thioesterase family.</text>
</comment>
<accession>Q6GNY7</accession>
<reference key="1">
    <citation type="submission" date="2004-06" db="EMBL/GenBank/DDBJ databases">
        <authorList>
            <consortium name="NIH - Xenopus Gene Collection (XGC) project"/>
        </authorList>
    </citation>
    <scope>NUCLEOTIDE SEQUENCE [LARGE SCALE MRNA]</scope>
    <source>
        <tissue>Spleen</tissue>
    </source>
</reference>
<feature type="signal peptide" evidence="2">
    <location>
        <begin position="1"/>
        <end position="20"/>
    </location>
</feature>
<feature type="chain" id="PRO_0000247508" description="Lysosomal thioesterase PPT2-B">
    <location>
        <begin position="21"/>
        <end position="288"/>
    </location>
</feature>
<feature type="active site" description="Nucleophile" evidence="1">
    <location>
        <position position="97"/>
    </location>
</feature>
<feature type="active site" evidence="1">
    <location>
        <position position="214"/>
    </location>
</feature>
<feature type="active site" evidence="1">
    <location>
        <position position="269"/>
    </location>
</feature>
<feature type="glycosylation site" description="N-linked (GlcNAc...) asparagine" evidence="2">
    <location>
        <position position="143"/>
    </location>
</feature>
<feature type="glycosylation site" description="N-linked (GlcNAc...) asparagine" evidence="2">
    <location>
        <position position="192"/>
    </location>
</feature>
<feature type="glycosylation site" description="N-linked (GlcNAc...) asparagine" evidence="2">
    <location>
        <position position="275"/>
    </location>
</feature>
<feature type="disulfide bond" evidence="1">
    <location>
        <begin position="95"/>
        <end position="103"/>
    </location>
</feature>
<feature type="disulfide bond" evidence="1">
    <location>
        <begin position="151"/>
        <end position="162"/>
    </location>
</feature>
<evidence type="ECO:0000250" key="1">
    <source>
        <dbReference type="UniProtKB" id="Q9UMR5"/>
    </source>
</evidence>
<evidence type="ECO:0000255" key="2"/>
<evidence type="ECO:0000305" key="3"/>
<sequence>MRGYLLLLPLLLCLVDNSVSYKPVILVHGLLSSSKSFDKLIQFIKKAHPGTDIYPVDMFNHLKSLNPMWKQVYEIRKYISPIIKNAGLKGVHLICYSQGGLICRGLLETMPEHNVDTFIALSSPLMGQYGMTLYVQKALPLVNISALQEVCYRKFFKEISICGYWRDPHRYEKYLEYSAFLPKLNNELLDSNSTERKRNFLRLRKLVLIGGPDDEVIAPWQSSHFGFYNEKEEVVNMKDQMVYQKDTFGLQSLDGRGAITIYSVPGVLHASWPNNQTVFKNYIEKWLT</sequence>
<proteinExistence type="evidence at transcript level"/>
<dbReference type="EC" id="3.1.2.2" evidence="1"/>
<dbReference type="EMBL" id="BC073363">
    <property type="protein sequence ID" value="AAH73363.1"/>
    <property type="molecule type" value="mRNA"/>
</dbReference>
<dbReference type="RefSeq" id="NP_001085801.1">
    <property type="nucleotide sequence ID" value="NM_001092332.1"/>
</dbReference>
<dbReference type="SMR" id="Q6GNY7"/>
<dbReference type="ESTHER" id="xenla-q6gny7">
    <property type="family name" value="Palmitoyl-protein_thioesterase"/>
</dbReference>
<dbReference type="GlyCosmos" id="Q6GNY7">
    <property type="glycosylation" value="3 sites, No reported glycans"/>
</dbReference>
<dbReference type="GeneID" id="444228"/>
<dbReference type="KEGG" id="xla:444228"/>
<dbReference type="AGR" id="Xenbase:XB-GENE-6255702"/>
<dbReference type="CTD" id="444228"/>
<dbReference type="Xenbase" id="XB-GENE-6255702">
    <property type="gene designation" value="ppt2l.L"/>
</dbReference>
<dbReference type="OMA" id="ITHISWI"/>
<dbReference type="OrthoDB" id="155976at2759"/>
<dbReference type="Proteomes" id="UP000186698">
    <property type="component" value="Chromosome 8L"/>
</dbReference>
<dbReference type="Bgee" id="444228">
    <property type="expression patterns" value="Expressed in spleen and 19 other cell types or tissues"/>
</dbReference>
<dbReference type="GO" id="GO:0005576">
    <property type="term" value="C:extracellular region"/>
    <property type="evidence" value="ECO:0000318"/>
    <property type="project" value="GO_Central"/>
</dbReference>
<dbReference type="GO" id="GO:0005764">
    <property type="term" value="C:lysosome"/>
    <property type="evidence" value="ECO:0000318"/>
    <property type="project" value="GO_Central"/>
</dbReference>
<dbReference type="GO" id="GO:0047617">
    <property type="term" value="F:fatty acyl-CoA hydrolase activity"/>
    <property type="evidence" value="ECO:0000250"/>
    <property type="project" value="UniProtKB"/>
</dbReference>
<dbReference type="GO" id="GO:0098599">
    <property type="term" value="F:palmitoyl hydrolase activity"/>
    <property type="evidence" value="ECO:0000250"/>
    <property type="project" value="UniProtKB"/>
</dbReference>
<dbReference type="GO" id="GO:0008474">
    <property type="term" value="F:palmitoyl-(protein) hydrolase activity"/>
    <property type="evidence" value="ECO:0000318"/>
    <property type="project" value="GO_Central"/>
</dbReference>
<dbReference type="GO" id="GO:0016790">
    <property type="term" value="F:thiolester hydrolase activity"/>
    <property type="evidence" value="ECO:0000250"/>
    <property type="project" value="UniProtKB"/>
</dbReference>
<dbReference type="FunFam" id="3.40.50.1820:FF:000037">
    <property type="entry name" value="Lysosomal thioesterase PPT2 homolog"/>
    <property type="match status" value="1"/>
</dbReference>
<dbReference type="Gene3D" id="3.40.50.1820">
    <property type="entry name" value="alpha/beta hydrolase"/>
    <property type="match status" value="1"/>
</dbReference>
<dbReference type="InterPro" id="IPR029058">
    <property type="entry name" value="AB_hydrolase_fold"/>
</dbReference>
<dbReference type="PANTHER" id="PTHR11247:SF27">
    <property type="entry name" value="LYSOSOMAL THIOESTERASE PPT2"/>
    <property type="match status" value="1"/>
</dbReference>
<dbReference type="PANTHER" id="PTHR11247">
    <property type="entry name" value="PALMITOYL-PROTEIN THIOESTERASE/DOLICHYLDIPHOSPHATASE 1"/>
    <property type="match status" value="1"/>
</dbReference>
<dbReference type="Pfam" id="PF02089">
    <property type="entry name" value="Palm_thioest"/>
    <property type="match status" value="1"/>
</dbReference>
<dbReference type="SUPFAM" id="SSF53474">
    <property type="entry name" value="alpha/beta-Hydrolases"/>
    <property type="match status" value="1"/>
</dbReference>
<organism>
    <name type="scientific">Xenopus laevis</name>
    <name type="common">African clawed frog</name>
    <dbReference type="NCBI Taxonomy" id="8355"/>
    <lineage>
        <taxon>Eukaryota</taxon>
        <taxon>Metazoa</taxon>
        <taxon>Chordata</taxon>
        <taxon>Craniata</taxon>
        <taxon>Vertebrata</taxon>
        <taxon>Euteleostomi</taxon>
        <taxon>Amphibia</taxon>
        <taxon>Batrachia</taxon>
        <taxon>Anura</taxon>
        <taxon>Pipoidea</taxon>
        <taxon>Pipidae</taxon>
        <taxon>Xenopodinae</taxon>
        <taxon>Xenopus</taxon>
        <taxon>Xenopus</taxon>
    </lineage>
</organism>
<keyword id="KW-1015">Disulfide bond</keyword>
<keyword id="KW-0325">Glycoprotein</keyword>
<keyword id="KW-0378">Hydrolase</keyword>
<keyword id="KW-0458">Lysosome</keyword>
<keyword id="KW-1185">Reference proteome</keyword>
<keyword id="KW-0732">Signal</keyword>
<name>PPT2B_XENLA</name>